<accession>Q8EK54</accession>
<name>RL6_SHEON</name>
<comment type="function">
    <text evidence="1">This protein binds to the 23S rRNA, and is important in its secondary structure. It is located near the subunit interface in the base of the L7/L12 stalk, and near the tRNA binding site of the peptidyltransferase center.</text>
</comment>
<comment type="subunit">
    <text evidence="1">Part of the 50S ribosomal subunit.</text>
</comment>
<comment type="similarity">
    <text evidence="1">Belongs to the universal ribosomal protein uL6 family.</text>
</comment>
<proteinExistence type="inferred from homology"/>
<gene>
    <name evidence="1" type="primary">rplF</name>
    <name type="ordered locus">SO_0246</name>
</gene>
<organism>
    <name type="scientific">Shewanella oneidensis (strain ATCC 700550 / JCM 31522 / CIP 106686 / LMG 19005 / NCIMB 14063 / MR-1)</name>
    <dbReference type="NCBI Taxonomy" id="211586"/>
    <lineage>
        <taxon>Bacteria</taxon>
        <taxon>Pseudomonadati</taxon>
        <taxon>Pseudomonadota</taxon>
        <taxon>Gammaproteobacteria</taxon>
        <taxon>Alteromonadales</taxon>
        <taxon>Shewanellaceae</taxon>
        <taxon>Shewanella</taxon>
    </lineage>
</organism>
<protein>
    <recommendedName>
        <fullName evidence="1">Large ribosomal subunit protein uL6</fullName>
    </recommendedName>
    <alternativeName>
        <fullName evidence="3">50S ribosomal protein L6</fullName>
    </alternativeName>
</protein>
<keyword id="KW-1185">Reference proteome</keyword>
<keyword id="KW-0687">Ribonucleoprotein</keyword>
<keyword id="KW-0689">Ribosomal protein</keyword>
<keyword id="KW-0694">RNA-binding</keyword>
<keyword id="KW-0699">rRNA-binding</keyword>
<dbReference type="EMBL" id="AE014299">
    <property type="protein sequence ID" value="AAN53331.1"/>
    <property type="molecule type" value="Genomic_DNA"/>
</dbReference>
<dbReference type="RefSeq" id="NP_715886.1">
    <property type="nucleotide sequence ID" value="NC_004347.2"/>
</dbReference>
<dbReference type="RefSeq" id="WP_011070626.1">
    <property type="nucleotide sequence ID" value="NZ_CP053946.1"/>
</dbReference>
<dbReference type="SMR" id="Q8EK54"/>
<dbReference type="STRING" id="211586.SO_0246"/>
<dbReference type="PaxDb" id="211586-SO_0246"/>
<dbReference type="KEGG" id="son:SO_0246"/>
<dbReference type="PATRIC" id="fig|211586.12.peg.234"/>
<dbReference type="eggNOG" id="COG0097">
    <property type="taxonomic scope" value="Bacteria"/>
</dbReference>
<dbReference type="HOGENOM" id="CLU_065464_1_2_6"/>
<dbReference type="OrthoDB" id="9805007at2"/>
<dbReference type="PhylomeDB" id="Q8EK54"/>
<dbReference type="BioCyc" id="SONE211586:G1GMP-235-MONOMER"/>
<dbReference type="Proteomes" id="UP000008186">
    <property type="component" value="Chromosome"/>
</dbReference>
<dbReference type="GO" id="GO:0022625">
    <property type="term" value="C:cytosolic large ribosomal subunit"/>
    <property type="evidence" value="ECO:0000318"/>
    <property type="project" value="GO_Central"/>
</dbReference>
<dbReference type="GO" id="GO:0019843">
    <property type="term" value="F:rRNA binding"/>
    <property type="evidence" value="ECO:0007669"/>
    <property type="project" value="UniProtKB-UniRule"/>
</dbReference>
<dbReference type="GO" id="GO:0003735">
    <property type="term" value="F:structural constituent of ribosome"/>
    <property type="evidence" value="ECO:0000318"/>
    <property type="project" value="GO_Central"/>
</dbReference>
<dbReference type="GO" id="GO:0002181">
    <property type="term" value="P:cytoplasmic translation"/>
    <property type="evidence" value="ECO:0000318"/>
    <property type="project" value="GO_Central"/>
</dbReference>
<dbReference type="FunFam" id="3.90.930.12:FF:000001">
    <property type="entry name" value="50S ribosomal protein L6"/>
    <property type="match status" value="1"/>
</dbReference>
<dbReference type="FunFam" id="3.90.930.12:FF:000002">
    <property type="entry name" value="50S ribosomal protein L6"/>
    <property type="match status" value="1"/>
</dbReference>
<dbReference type="Gene3D" id="3.90.930.12">
    <property type="entry name" value="Ribosomal protein L6, alpha-beta domain"/>
    <property type="match status" value="2"/>
</dbReference>
<dbReference type="HAMAP" id="MF_01365_B">
    <property type="entry name" value="Ribosomal_uL6_B"/>
    <property type="match status" value="1"/>
</dbReference>
<dbReference type="InterPro" id="IPR000702">
    <property type="entry name" value="Ribosomal_uL6-like"/>
</dbReference>
<dbReference type="InterPro" id="IPR036789">
    <property type="entry name" value="Ribosomal_uL6-like_a/b-dom_sf"/>
</dbReference>
<dbReference type="InterPro" id="IPR020040">
    <property type="entry name" value="Ribosomal_uL6_a/b-dom"/>
</dbReference>
<dbReference type="InterPro" id="IPR019906">
    <property type="entry name" value="Ribosomal_uL6_bac-type"/>
</dbReference>
<dbReference type="InterPro" id="IPR002358">
    <property type="entry name" value="Ribosomal_uL6_CS"/>
</dbReference>
<dbReference type="NCBIfam" id="TIGR03654">
    <property type="entry name" value="L6_bact"/>
    <property type="match status" value="1"/>
</dbReference>
<dbReference type="PANTHER" id="PTHR11655">
    <property type="entry name" value="60S/50S RIBOSOMAL PROTEIN L6/L9"/>
    <property type="match status" value="1"/>
</dbReference>
<dbReference type="PANTHER" id="PTHR11655:SF14">
    <property type="entry name" value="LARGE RIBOSOMAL SUBUNIT PROTEIN UL6M"/>
    <property type="match status" value="1"/>
</dbReference>
<dbReference type="Pfam" id="PF00347">
    <property type="entry name" value="Ribosomal_L6"/>
    <property type="match status" value="2"/>
</dbReference>
<dbReference type="PIRSF" id="PIRSF002162">
    <property type="entry name" value="Ribosomal_L6"/>
    <property type="match status" value="1"/>
</dbReference>
<dbReference type="PRINTS" id="PR00059">
    <property type="entry name" value="RIBOSOMALL6"/>
</dbReference>
<dbReference type="SUPFAM" id="SSF56053">
    <property type="entry name" value="Ribosomal protein L6"/>
    <property type="match status" value="2"/>
</dbReference>
<dbReference type="PROSITE" id="PS00525">
    <property type="entry name" value="RIBOSOMAL_L6_1"/>
    <property type="match status" value="1"/>
</dbReference>
<reference key="1">
    <citation type="journal article" date="2002" name="Nat. Biotechnol.">
        <title>Genome sequence of the dissimilatory metal ion-reducing bacterium Shewanella oneidensis.</title>
        <authorList>
            <person name="Heidelberg J.F."/>
            <person name="Paulsen I.T."/>
            <person name="Nelson K.E."/>
            <person name="Gaidos E.J."/>
            <person name="Nelson W.C."/>
            <person name="Read T.D."/>
            <person name="Eisen J.A."/>
            <person name="Seshadri R."/>
            <person name="Ward N.L."/>
            <person name="Methe B.A."/>
            <person name="Clayton R.A."/>
            <person name="Meyer T."/>
            <person name="Tsapin A."/>
            <person name="Scott J."/>
            <person name="Beanan M.J."/>
            <person name="Brinkac L.M."/>
            <person name="Daugherty S.C."/>
            <person name="DeBoy R.T."/>
            <person name="Dodson R.J."/>
            <person name="Durkin A.S."/>
            <person name="Haft D.H."/>
            <person name="Kolonay J.F."/>
            <person name="Madupu R."/>
            <person name="Peterson J.D."/>
            <person name="Umayam L.A."/>
            <person name="White O."/>
            <person name="Wolf A.M."/>
            <person name="Vamathevan J.J."/>
            <person name="Weidman J.F."/>
            <person name="Impraim M."/>
            <person name="Lee K."/>
            <person name="Berry K.J."/>
            <person name="Lee C."/>
            <person name="Mueller J."/>
            <person name="Khouri H.M."/>
            <person name="Gill J."/>
            <person name="Utterback T.R."/>
            <person name="McDonald L.A."/>
            <person name="Feldblyum T.V."/>
            <person name="Smith H.O."/>
            <person name="Venter J.C."/>
            <person name="Nealson K.H."/>
            <person name="Fraser C.M."/>
        </authorList>
    </citation>
    <scope>NUCLEOTIDE SEQUENCE [LARGE SCALE GENOMIC DNA]</scope>
    <source>
        <strain>ATCC 700550 / JCM 31522 / CIP 106686 / LMG 19005 / NCIMB 14063 / MR-1</strain>
    </source>
</reference>
<evidence type="ECO:0000255" key="1">
    <source>
        <dbReference type="HAMAP-Rule" id="MF_01365"/>
    </source>
</evidence>
<evidence type="ECO:0000256" key="2">
    <source>
        <dbReference type="SAM" id="MobiDB-lite"/>
    </source>
</evidence>
<evidence type="ECO:0000305" key="3"/>
<feature type="chain" id="PRO_0000265295" description="Large ribosomal subunit protein uL6">
    <location>
        <begin position="1"/>
        <end position="177"/>
    </location>
</feature>
<feature type="region of interest" description="Disordered" evidence="2">
    <location>
        <begin position="152"/>
        <end position="177"/>
    </location>
</feature>
<feature type="compositionally biased region" description="Basic and acidic residues" evidence="2">
    <location>
        <begin position="152"/>
        <end position="171"/>
    </location>
</feature>
<sequence>MSRVAKAPVSIPAGVEVTLNEQTLTVKGAKGSLTRVINNAVNVVIENGVIKFLPVEGAVGAWAQAGTTRALVNNMVVGVSQGFERKLKLVGVGYRAKLVGADIDLTLGFSHPLVHKLPAGVTAECPSQTDIVLRGVDKQLIGQVAAEIRGYRPPEPYKGKGVRYDDEEVRRKEAKKK</sequence>